<protein>
    <recommendedName>
        <fullName evidence="4">A-type ATP synthase subunit I</fullName>
    </recommendedName>
</protein>
<dbReference type="EMBL" id="AJ248288">
    <property type="protein sequence ID" value="CAB50671.1"/>
    <property type="molecule type" value="Genomic_DNA"/>
</dbReference>
<dbReference type="EMBL" id="HE613800">
    <property type="protein sequence ID" value="CCE71240.1"/>
    <property type="molecule type" value="Genomic_DNA"/>
</dbReference>
<dbReference type="PIR" id="A75029">
    <property type="entry name" value="A75029"/>
</dbReference>
<dbReference type="RefSeq" id="WP_010868885.1">
    <property type="nucleotide sequence ID" value="NC_000868.1"/>
</dbReference>
<dbReference type="SMR" id="Q9UXU2"/>
<dbReference type="STRING" id="272844.PAB1180"/>
<dbReference type="KEGG" id="pab:PAB1180"/>
<dbReference type="PATRIC" id="fig|272844.11.peg.1885"/>
<dbReference type="eggNOG" id="arCOG04138">
    <property type="taxonomic scope" value="Archaea"/>
</dbReference>
<dbReference type="HOGENOM" id="CLU_025558_1_0_2"/>
<dbReference type="OrthoDB" id="85892at2157"/>
<dbReference type="PhylomeDB" id="Q9UXU2"/>
<dbReference type="Proteomes" id="UP000000810">
    <property type="component" value="Chromosome"/>
</dbReference>
<dbReference type="Proteomes" id="UP000009139">
    <property type="component" value="Chromosome"/>
</dbReference>
<dbReference type="GO" id="GO:0005886">
    <property type="term" value="C:plasma membrane"/>
    <property type="evidence" value="ECO:0007669"/>
    <property type="project" value="UniProtKB-SubCell"/>
</dbReference>
<dbReference type="GO" id="GO:0033179">
    <property type="term" value="C:proton-transporting V-type ATPase, V0 domain"/>
    <property type="evidence" value="ECO:0007669"/>
    <property type="project" value="InterPro"/>
</dbReference>
<dbReference type="GO" id="GO:0016471">
    <property type="term" value="C:vacuolar proton-transporting V-type ATPase complex"/>
    <property type="evidence" value="ECO:0007669"/>
    <property type="project" value="TreeGrafter"/>
</dbReference>
<dbReference type="GO" id="GO:0051117">
    <property type="term" value="F:ATPase binding"/>
    <property type="evidence" value="ECO:0007669"/>
    <property type="project" value="TreeGrafter"/>
</dbReference>
<dbReference type="GO" id="GO:0046961">
    <property type="term" value="F:proton-transporting ATPase activity, rotational mechanism"/>
    <property type="evidence" value="ECO:0007669"/>
    <property type="project" value="InterPro"/>
</dbReference>
<dbReference type="GO" id="GO:0007035">
    <property type="term" value="P:vacuolar acidification"/>
    <property type="evidence" value="ECO:0007669"/>
    <property type="project" value="TreeGrafter"/>
</dbReference>
<dbReference type="Gene3D" id="1.20.1460.20">
    <property type="match status" value="1"/>
</dbReference>
<dbReference type="Gene3D" id="3.30.70.2170">
    <property type="match status" value="1"/>
</dbReference>
<dbReference type="Gene3D" id="3.30.70.2750">
    <property type="match status" value="1"/>
</dbReference>
<dbReference type="InterPro" id="IPR002490">
    <property type="entry name" value="V-ATPase_116kDa_su"/>
</dbReference>
<dbReference type="NCBIfam" id="NF004428">
    <property type="entry name" value="PRK05771.2-1"/>
    <property type="match status" value="1"/>
</dbReference>
<dbReference type="PANTHER" id="PTHR11629:SF63">
    <property type="entry name" value="V-TYPE PROTON ATPASE SUBUNIT A"/>
    <property type="match status" value="1"/>
</dbReference>
<dbReference type="PANTHER" id="PTHR11629">
    <property type="entry name" value="VACUOLAR PROTON ATPASES"/>
    <property type="match status" value="1"/>
</dbReference>
<dbReference type="Pfam" id="PF01496">
    <property type="entry name" value="V_ATPase_I"/>
    <property type="match status" value="2"/>
</dbReference>
<name>AATI_PYRAB</name>
<gene>
    <name evidence="3" type="primary">atpI</name>
    <name type="ordered locus">PYRAB17660</name>
    <name type="ORF">PAB1180</name>
</gene>
<evidence type="ECO:0000250" key="1">
    <source>
        <dbReference type="UniProtKB" id="Q57675"/>
    </source>
</evidence>
<evidence type="ECO:0000255" key="2"/>
<evidence type="ECO:0000303" key="3">
    <source>
    </source>
</evidence>
<evidence type="ECO:0000305" key="4"/>
<reference key="1">
    <citation type="journal article" date="2003" name="Mol. Microbiol.">
        <title>An integrated analysis of the genome of the hyperthermophilic archaeon Pyrococcus abyssi.</title>
        <authorList>
            <person name="Cohen G.N."/>
            <person name="Barbe V."/>
            <person name="Flament D."/>
            <person name="Galperin M."/>
            <person name="Heilig R."/>
            <person name="Lecompte O."/>
            <person name="Poch O."/>
            <person name="Prieur D."/>
            <person name="Querellou J."/>
            <person name="Ripp R."/>
            <person name="Thierry J.-C."/>
            <person name="Van der Oost J."/>
            <person name="Weissenbach J."/>
            <person name="Zivanovic Y."/>
            <person name="Forterre P."/>
        </authorList>
    </citation>
    <scope>NUCLEOTIDE SEQUENCE [LARGE SCALE GENOMIC DNA]</scope>
    <source>
        <strain>GE5 / Orsay</strain>
    </source>
</reference>
<reference key="2">
    <citation type="journal article" date="2012" name="Curr. Microbiol.">
        <title>Re-annotation of two hyperthermophilic archaea Pyrococcus abyssi GE5 and Pyrococcus furiosus DSM 3638.</title>
        <authorList>
            <person name="Gao J."/>
            <person name="Wang J."/>
        </authorList>
    </citation>
    <scope>GENOME REANNOTATION</scope>
    <source>
        <strain>GE5 / Orsay</strain>
    </source>
</reference>
<feature type="chain" id="PRO_0000119232" description="A-type ATP synthase subunit I">
    <location>
        <begin position="1"/>
        <end position="659"/>
    </location>
</feature>
<feature type="transmembrane region" description="Helical" evidence="2">
    <location>
        <begin position="376"/>
        <end position="396"/>
    </location>
</feature>
<feature type="transmembrane region" description="Helical" evidence="2">
    <location>
        <begin position="415"/>
        <end position="435"/>
    </location>
</feature>
<feature type="transmembrane region" description="Helical" evidence="2">
    <location>
        <begin position="460"/>
        <end position="480"/>
    </location>
</feature>
<feature type="transmembrane region" description="Helical" evidence="2">
    <location>
        <begin position="489"/>
        <end position="509"/>
    </location>
</feature>
<feature type="transmembrane region" description="Helical" evidence="2">
    <location>
        <begin position="513"/>
        <end position="533"/>
    </location>
</feature>
<feature type="transmembrane region" description="Helical" evidence="2">
    <location>
        <begin position="542"/>
        <end position="562"/>
    </location>
</feature>
<feature type="transmembrane region" description="Helical" evidence="2">
    <location>
        <begin position="566"/>
        <end position="586"/>
    </location>
</feature>
<feature type="transmembrane region" description="Helical" evidence="2">
    <location>
        <begin position="590"/>
        <end position="610"/>
    </location>
</feature>
<organism>
    <name type="scientific">Pyrococcus abyssi (strain GE5 / Orsay)</name>
    <dbReference type="NCBI Taxonomy" id="272844"/>
    <lineage>
        <taxon>Archaea</taxon>
        <taxon>Methanobacteriati</taxon>
        <taxon>Methanobacteriota</taxon>
        <taxon>Thermococci</taxon>
        <taxon>Thermococcales</taxon>
        <taxon>Thermococcaceae</taxon>
        <taxon>Pyrococcus</taxon>
    </lineage>
</organism>
<sequence length="659" mass="74289">MFKPEEIVKVEIITLARFRDTLLTYLHEMGVAQLDEVPIEGIQRDTPNEFYRKATSYSITLSRLIDTVKHYLPPRKGGIKEFIFPEEKKKRKYKYRGIEELIKDVEKFLGEAEPKIREVESEVSRLNNEISALKDSLNALELLSSLNIEIENLRGRSFLSVEVGLVDREKVENLIKELEEIAEGRVFTLRKDLAAKSLLVVVSLRKDSGKVISLLAKYGFEKIEIPEGEGLPKDLIPKYIERIKGKEKELEDVKLKGREIAEKYYEDLVFYKELMDNEREKSNFLSYLVRTEMTFGLLAWVPKKDVEKVVEGVKRITNGIAYIEVREPSEEEIENVPVKLKNPEFISHFEMLTEMYGVPKYNEIDPTPILAFTYSFFFGFMLTDFVYGLLLGVISALLVKGHSKLKDGTWKFAKIMLWASAFTMVLGILFGSYCGNLLDMAGVKVPRLLDTMSEALTVLVMALAIGLGHLFTGYILGFIVNWKNGDKRAAILEQLPWVFIIIGITLFALSSKLGIPQIAFKAVFGVGLALFVVGEIVNNKGMAVLLTISDFFGFIGNWLSYARLMALALATSGIALVINIIANMVWGLKIGPIPLGILIGIVILIGGHIFSTAINALGAFVHALRLHYVEFFGTFYSGEGRKFEPFAAKREVSELEIES</sequence>
<accession>Q9UXU2</accession>
<accession>G8ZKU9</accession>
<proteinExistence type="inferred from homology"/>
<keyword id="KW-1003">Cell membrane</keyword>
<keyword id="KW-0375">Hydrogen ion transport</keyword>
<keyword id="KW-0406">Ion transport</keyword>
<keyword id="KW-0472">Membrane</keyword>
<keyword id="KW-0812">Transmembrane</keyword>
<keyword id="KW-1133">Transmembrane helix</keyword>
<keyword id="KW-0813">Transport</keyword>
<comment type="function">
    <text evidence="1">Component of the A-type ATP synthase that produces ATP from ADP in the presence of a proton gradient across the membrane.</text>
</comment>
<comment type="subunit">
    <text evidence="1">Has multiple subunits with at least A(3), B(3), C, D, E, F, H, I and proteolipid K(x).</text>
</comment>
<comment type="subcellular location">
    <subcellularLocation>
        <location evidence="4">Cell membrane</location>
        <topology evidence="4">Multi-pass membrane protein</topology>
    </subcellularLocation>
</comment>
<comment type="similarity">
    <text evidence="4">Belongs to the V-ATPase 116 kDa subunit family.</text>
</comment>